<dbReference type="EC" id="2.1.1.163" evidence="1"/>
<dbReference type="EMBL" id="CP001620">
    <property type="protein sequence ID" value="ACR18598.1"/>
    <property type="molecule type" value="Genomic_DNA"/>
</dbReference>
<dbReference type="RefSeq" id="WP_012732485.1">
    <property type="nucleotide sequence ID" value="NC_012704.1"/>
</dbReference>
<dbReference type="SMR" id="C4LL93"/>
<dbReference type="STRING" id="645127.ckrop_1883"/>
<dbReference type="KEGG" id="ckp:ckrop_1883"/>
<dbReference type="eggNOG" id="COG2226">
    <property type="taxonomic scope" value="Bacteria"/>
</dbReference>
<dbReference type="HOGENOM" id="CLU_037990_0_0_11"/>
<dbReference type="OrthoDB" id="9808140at2"/>
<dbReference type="UniPathway" id="UPA00079">
    <property type="reaction ID" value="UER00169"/>
</dbReference>
<dbReference type="Proteomes" id="UP000001473">
    <property type="component" value="Chromosome"/>
</dbReference>
<dbReference type="GO" id="GO:0043770">
    <property type="term" value="F:demethylmenaquinone methyltransferase activity"/>
    <property type="evidence" value="ECO:0007669"/>
    <property type="project" value="UniProtKB-UniRule"/>
</dbReference>
<dbReference type="GO" id="GO:0009234">
    <property type="term" value="P:menaquinone biosynthetic process"/>
    <property type="evidence" value="ECO:0007669"/>
    <property type="project" value="UniProtKB-UniRule"/>
</dbReference>
<dbReference type="GO" id="GO:0032259">
    <property type="term" value="P:methylation"/>
    <property type="evidence" value="ECO:0007669"/>
    <property type="project" value="UniProtKB-KW"/>
</dbReference>
<dbReference type="CDD" id="cd02440">
    <property type="entry name" value="AdoMet_MTases"/>
    <property type="match status" value="1"/>
</dbReference>
<dbReference type="Gene3D" id="3.40.50.150">
    <property type="entry name" value="Vaccinia Virus protein VP39"/>
    <property type="match status" value="1"/>
</dbReference>
<dbReference type="HAMAP" id="MF_01813">
    <property type="entry name" value="MenG_UbiE_methyltr"/>
    <property type="match status" value="1"/>
</dbReference>
<dbReference type="InterPro" id="IPR029063">
    <property type="entry name" value="SAM-dependent_MTases_sf"/>
</dbReference>
<dbReference type="InterPro" id="IPR004033">
    <property type="entry name" value="UbiE/COQ5_MeTrFase"/>
</dbReference>
<dbReference type="InterPro" id="IPR023576">
    <property type="entry name" value="UbiE/COQ5_MeTrFase_CS"/>
</dbReference>
<dbReference type="NCBIfam" id="TIGR01934">
    <property type="entry name" value="MenG_MenH_UbiE"/>
    <property type="match status" value="1"/>
</dbReference>
<dbReference type="NCBIfam" id="NF001241">
    <property type="entry name" value="PRK00216.1-2"/>
    <property type="match status" value="1"/>
</dbReference>
<dbReference type="PANTHER" id="PTHR43591:SF24">
    <property type="entry name" value="2-METHOXY-6-POLYPRENYL-1,4-BENZOQUINOL METHYLASE, MITOCHONDRIAL"/>
    <property type="match status" value="1"/>
</dbReference>
<dbReference type="PANTHER" id="PTHR43591">
    <property type="entry name" value="METHYLTRANSFERASE"/>
    <property type="match status" value="1"/>
</dbReference>
<dbReference type="Pfam" id="PF01209">
    <property type="entry name" value="Ubie_methyltran"/>
    <property type="match status" value="1"/>
</dbReference>
<dbReference type="SUPFAM" id="SSF53335">
    <property type="entry name" value="S-adenosyl-L-methionine-dependent methyltransferases"/>
    <property type="match status" value="1"/>
</dbReference>
<dbReference type="PROSITE" id="PS51608">
    <property type="entry name" value="SAM_MT_UBIE"/>
    <property type="match status" value="1"/>
</dbReference>
<dbReference type="PROSITE" id="PS01184">
    <property type="entry name" value="UBIE_2"/>
    <property type="match status" value="1"/>
</dbReference>
<sequence length="229" mass="24751">MARATLEKKPREVARMFDAVGKKYDLTNTVLTGGIDTLWRKATRKRLDPKPGEKVVDLAAGTGVSTAELSKSGALVVGCDFSLGMLKAGRHRNVPLVAGDGLNLPFADNTFDAATISFGLRNFGDTAAGLREIARVVKPGGRLTVCEFSTPVIPVFSTIYTEYLMRALPTVAKIVSSDPESYVYLAESIRAWPDQETLARIIQSAGWKEVGWRNLTGGIVALHSATKPR</sequence>
<protein>
    <recommendedName>
        <fullName evidence="1">Demethylmenaquinone methyltransferase</fullName>
        <ecNumber evidence="1">2.1.1.163</ecNumber>
    </recommendedName>
</protein>
<organism>
    <name type="scientific">Corynebacterium kroppenstedtii (strain DSM 44385 / JCM 11950 / CIP 105744 / CCUG 35717)</name>
    <dbReference type="NCBI Taxonomy" id="645127"/>
    <lineage>
        <taxon>Bacteria</taxon>
        <taxon>Bacillati</taxon>
        <taxon>Actinomycetota</taxon>
        <taxon>Actinomycetes</taxon>
        <taxon>Mycobacteriales</taxon>
        <taxon>Corynebacteriaceae</taxon>
        <taxon>Corynebacterium</taxon>
    </lineage>
</organism>
<evidence type="ECO:0000255" key="1">
    <source>
        <dbReference type="HAMAP-Rule" id="MF_01813"/>
    </source>
</evidence>
<comment type="function">
    <text evidence="1">Methyltransferase required for the conversion of demethylmenaquinol (DMKH2) to menaquinol (MKH2).</text>
</comment>
<comment type="catalytic activity">
    <reaction evidence="1">
        <text>a 2-demethylmenaquinol + S-adenosyl-L-methionine = a menaquinol + S-adenosyl-L-homocysteine + H(+)</text>
        <dbReference type="Rhea" id="RHEA:42640"/>
        <dbReference type="Rhea" id="RHEA-COMP:9539"/>
        <dbReference type="Rhea" id="RHEA-COMP:9563"/>
        <dbReference type="ChEBI" id="CHEBI:15378"/>
        <dbReference type="ChEBI" id="CHEBI:18151"/>
        <dbReference type="ChEBI" id="CHEBI:55437"/>
        <dbReference type="ChEBI" id="CHEBI:57856"/>
        <dbReference type="ChEBI" id="CHEBI:59789"/>
        <dbReference type="EC" id="2.1.1.163"/>
    </reaction>
</comment>
<comment type="pathway">
    <text evidence="1">Quinol/quinone metabolism; menaquinone biosynthesis; menaquinol from 1,4-dihydroxy-2-naphthoate: step 2/2.</text>
</comment>
<comment type="similarity">
    <text evidence="1">Belongs to the class I-like SAM-binding methyltransferase superfamily. MenG/UbiE family.</text>
</comment>
<feature type="chain" id="PRO_1000215982" description="Demethylmenaquinone methyltransferase">
    <location>
        <begin position="1"/>
        <end position="229"/>
    </location>
</feature>
<feature type="binding site" evidence="1">
    <location>
        <position position="62"/>
    </location>
    <ligand>
        <name>S-adenosyl-L-methionine</name>
        <dbReference type="ChEBI" id="CHEBI:59789"/>
    </ligand>
</feature>
<feature type="binding site" evidence="1">
    <location>
        <position position="80"/>
    </location>
    <ligand>
        <name>S-adenosyl-L-methionine</name>
        <dbReference type="ChEBI" id="CHEBI:59789"/>
    </ligand>
</feature>
<feature type="binding site" evidence="1">
    <location>
        <begin position="100"/>
        <end position="101"/>
    </location>
    <ligand>
        <name>S-adenosyl-L-methionine</name>
        <dbReference type="ChEBI" id="CHEBI:59789"/>
    </ligand>
</feature>
<feature type="binding site" evidence="1">
    <location>
        <position position="117"/>
    </location>
    <ligand>
        <name>S-adenosyl-L-methionine</name>
        <dbReference type="ChEBI" id="CHEBI:59789"/>
    </ligand>
</feature>
<accession>C4LL93</accession>
<name>MENG_CORK4</name>
<reference key="1">
    <citation type="journal article" date="2008" name="J. Biotechnol.">
        <title>Ultrafast pyrosequencing of Corynebacterium kroppenstedtii DSM44385 revealed insights into the physiology of a lipophilic corynebacterium that lacks mycolic acids.</title>
        <authorList>
            <person name="Tauch A."/>
            <person name="Schneider J."/>
            <person name="Szczepanowski R."/>
            <person name="Tilker A."/>
            <person name="Viehoever P."/>
            <person name="Gartemann K.-H."/>
            <person name="Arnold W."/>
            <person name="Blom J."/>
            <person name="Brinkrolf K."/>
            <person name="Brune I."/>
            <person name="Goetker S."/>
            <person name="Weisshaar B."/>
            <person name="Goesmann A."/>
            <person name="Droege M."/>
            <person name="Puehler A."/>
        </authorList>
    </citation>
    <scope>NUCLEOTIDE SEQUENCE [LARGE SCALE GENOMIC DNA]</scope>
    <source>
        <strain>DSM 44385 / JCM 11950 / CIP 105744 / CCUG 35717</strain>
    </source>
</reference>
<keyword id="KW-0474">Menaquinone biosynthesis</keyword>
<keyword id="KW-0489">Methyltransferase</keyword>
<keyword id="KW-1185">Reference proteome</keyword>
<keyword id="KW-0949">S-adenosyl-L-methionine</keyword>
<keyword id="KW-0808">Transferase</keyword>
<gene>
    <name evidence="1" type="primary">menG</name>
    <name type="ordered locus">ckrop_1883</name>
</gene>
<proteinExistence type="inferred from homology"/>